<accession>P94661</accession>
<gene>
    <name type="ordered locus">CCA_00181</name>
</gene>
<evidence type="ECO:0000305" key="1"/>
<sequence>MECIQHESCFDLDDRENAQQLEVQEGTEMVSITQAAKLHNVTRQAIYVAIKQKKLKASKTTRWEIDLKDLEDYKRNRYSRKKSLYQGELLFDNDKGFYSVNQVADMLGIPVQKVYYATRTGTMRGERKGAAWVISQSEIDRYKSEYLNKQTVKKMKEVAVEHPTATPADAVFSGTALFEND</sequence>
<organism>
    <name type="scientific">Chlamydia caviae (strain ATCC VR-813 / DSM 19441 / 03DC25 / GPIC)</name>
    <name type="common">Chlamydophila caviae</name>
    <dbReference type="NCBI Taxonomy" id="227941"/>
    <lineage>
        <taxon>Bacteria</taxon>
        <taxon>Pseudomonadati</taxon>
        <taxon>Chlamydiota</taxon>
        <taxon>Chlamydiia</taxon>
        <taxon>Chlamydiales</taxon>
        <taxon>Chlamydiaceae</taxon>
        <taxon>Chlamydia/Chlamydophila group</taxon>
        <taxon>Chlamydia</taxon>
    </lineage>
</organism>
<proteinExistence type="inferred from homology"/>
<dbReference type="EMBL" id="U41759">
    <property type="protein sequence ID" value="AAB41140.1"/>
    <property type="molecule type" value="Genomic_DNA"/>
</dbReference>
<dbReference type="EMBL" id="AE015925">
    <property type="protein sequence ID" value="AAP04932.1"/>
    <property type="molecule type" value="Genomic_DNA"/>
</dbReference>
<dbReference type="PIR" id="JC5207">
    <property type="entry name" value="JC5207"/>
</dbReference>
<dbReference type="RefSeq" id="WP_011006153.1">
    <property type="nucleotide sequence ID" value="NC_003361.3"/>
</dbReference>
<dbReference type="SMR" id="P94661"/>
<dbReference type="STRING" id="227941.CCA_00181"/>
<dbReference type="KEGG" id="cca:CCA_00181"/>
<dbReference type="eggNOG" id="ENOG5030EXK">
    <property type="taxonomic scope" value="Bacteria"/>
</dbReference>
<dbReference type="HOGENOM" id="CLU_138391_0_0_0"/>
<dbReference type="OrthoDB" id="17929at2"/>
<dbReference type="Proteomes" id="UP000002193">
    <property type="component" value="Chromosome"/>
</dbReference>
<dbReference type="InterPro" id="IPR041657">
    <property type="entry name" value="HTH_17"/>
</dbReference>
<dbReference type="Pfam" id="PF12728">
    <property type="entry name" value="HTH_17"/>
    <property type="match status" value="2"/>
</dbReference>
<reference key="1">
    <citation type="journal article" date="1996" name="Gene">
        <title>Homologs of Escherichia coli recJ, gltX and of a putative 'early' gene of avian Chlamydia psittaci are located upstream of the 'late' omp2 locus of Chlamydia psittaci strain guinea pig inclusion conjunctivitis.</title>
        <authorList>
            <person name="Hsia R.C."/>
            <person name="Bavoil P.M."/>
        </authorList>
    </citation>
    <scope>NUCLEOTIDE SEQUENCE [GENOMIC DNA]</scope>
    <source>
        <strain>ATCC VR-813 / DSM 19441 / 03DC25 / GPIC</strain>
    </source>
</reference>
<reference key="2">
    <citation type="journal article" date="2003" name="Nucleic Acids Res.">
        <title>Genome sequence of Chlamydophila caviae (Chlamydia psittaci GPIC): examining the role of niche-specific genes in the evolution of the Chlamydiaceae.</title>
        <authorList>
            <person name="Read T.D."/>
            <person name="Myers G.S.A."/>
            <person name="Brunham R.C."/>
            <person name="Nelson W.C."/>
            <person name="Paulsen I.T."/>
            <person name="Heidelberg J.F."/>
            <person name="Holtzapple E.K."/>
            <person name="Khouri H.M."/>
            <person name="Federova N.B."/>
            <person name="Carty H.A."/>
            <person name="Umayam L.A."/>
            <person name="Haft D.H."/>
            <person name="Peterson J.D."/>
            <person name="Beanan M.J."/>
            <person name="White O."/>
            <person name="Salzberg S.L."/>
            <person name="Hsia R.-C."/>
            <person name="McClarty G."/>
            <person name="Rank R.G."/>
            <person name="Bavoil P.M."/>
            <person name="Fraser C.M."/>
        </authorList>
    </citation>
    <scope>NUCLEOTIDE SEQUENCE [LARGE SCALE GENOMIC DNA]</scope>
    <source>
        <strain>ATCC VR-813 / DSM 19441 / 03DC25 / GPIC</strain>
    </source>
</reference>
<name>EUO_CHLCV</name>
<feature type="chain" id="PRO_0000218396" description="Early upstream open reading frame">
    <location>
        <begin position="1"/>
        <end position="181"/>
    </location>
</feature>
<comment type="similarity">
    <text evidence="1">Belongs to the EUO family.</text>
</comment>
<protein>
    <recommendedName>
        <fullName>Early upstream open reading frame</fullName>
        <shortName>EUO</shortName>
    </recommendedName>
</protein>